<name>URM1_PICST</name>
<proteinExistence type="inferred from homology"/>
<comment type="function">
    <text evidence="1">Acts as a sulfur carrier required for 2-thiolation of mcm(5)S(2)U at tRNA wobble positions of cytosolic tRNA(Lys), tRNA(Glu) and tRNA(Gln). Serves as sulfur donor in tRNA 2-thiolation reaction by being thiocarboxylated (-COSH) at its C-terminus by the MOCS3 homolog UBA4. The sulfur is then transferred to tRNA to form 2-thiolation of mcm(5)S(2)U. Prior mcm(5) tRNA modification by the elongator complex is required for 2-thiolation. Also acts as a ubiquitin-like protein (UBL) that is covalently conjugated via an isopeptide bond to lysine residues of target proteins such as AHP1. The thiocarboxylated form serves as substrate for conjugation and oxidative stress specifically induces the formation of UBL-protein conjugates.</text>
</comment>
<comment type="pathway">
    <text evidence="1">tRNA modification; 5-methoxycarbonylmethyl-2-thiouridine-tRNA biosynthesis.</text>
</comment>
<comment type="subcellular location">
    <subcellularLocation>
        <location evidence="1">Cytoplasm</location>
    </subcellularLocation>
</comment>
<comment type="PTM">
    <text evidence="1">C-terminal thiocarboxylation occurs in 2 steps, it is first acyl-adenylated (-COAMP) via the hesA/moeB/thiF part of UBA4, then thiocarboxylated (-COSH) via the rhodanese domain of UBA4.</text>
</comment>
<comment type="similarity">
    <text evidence="1">Belongs to the URM1 family.</text>
</comment>
<accession>A3GFM6</accession>
<keyword id="KW-0963">Cytoplasm</keyword>
<keyword id="KW-1017">Isopeptide bond</keyword>
<keyword id="KW-1185">Reference proteome</keyword>
<keyword id="KW-0819">tRNA processing</keyword>
<keyword id="KW-0833">Ubl conjugation pathway</keyword>
<reference key="1">
    <citation type="journal article" date="2007" name="Nat. Biotechnol.">
        <title>Genome sequence of the lignocellulose-bioconverting and xylose-fermenting yeast Pichia stipitis.</title>
        <authorList>
            <person name="Jeffries T.W."/>
            <person name="Grigoriev I.V."/>
            <person name="Grimwood J."/>
            <person name="Laplaza J.M."/>
            <person name="Aerts A."/>
            <person name="Salamov A."/>
            <person name="Schmutz J."/>
            <person name="Lindquist E."/>
            <person name="Dehal P."/>
            <person name="Shapiro H."/>
            <person name="Jin Y.-S."/>
            <person name="Passoth V."/>
            <person name="Richardson P.M."/>
        </authorList>
    </citation>
    <scope>NUCLEOTIDE SEQUENCE [LARGE SCALE GENOMIC DNA]</scope>
    <source>
        <strain>ATCC 58785 / CBS 6054 / NBRC 10063 / NRRL Y-11545</strain>
    </source>
</reference>
<evidence type="ECO:0000255" key="1">
    <source>
        <dbReference type="HAMAP-Rule" id="MF_03048"/>
    </source>
</evidence>
<dbReference type="EMBL" id="AAVQ01000001">
    <property type="protein sequence ID" value="EAZ63376.1"/>
    <property type="molecule type" value="Genomic_DNA"/>
</dbReference>
<dbReference type="SMR" id="A3GFM6"/>
<dbReference type="FunCoup" id="A3GFM6">
    <property type="interactions" value="916"/>
</dbReference>
<dbReference type="STRING" id="322104.A3GFM6"/>
<dbReference type="KEGG" id="pic:PICST_34179"/>
<dbReference type="eggNOG" id="KOG4146">
    <property type="taxonomic scope" value="Eukaryota"/>
</dbReference>
<dbReference type="HOGENOM" id="CLU_148208_0_0_1"/>
<dbReference type="InParanoid" id="A3GFM6"/>
<dbReference type="OMA" id="IHFMAEK"/>
<dbReference type="OrthoDB" id="10248987at2759"/>
<dbReference type="UniPathway" id="UPA00988"/>
<dbReference type="Proteomes" id="UP000002258">
    <property type="component" value="Chromosome 1"/>
</dbReference>
<dbReference type="GO" id="GO:0005829">
    <property type="term" value="C:cytosol"/>
    <property type="evidence" value="ECO:0007669"/>
    <property type="project" value="UniProtKB-UniRule"/>
</dbReference>
<dbReference type="GO" id="GO:0042803">
    <property type="term" value="F:protein homodimerization activity"/>
    <property type="evidence" value="ECO:0007669"/>
    <property type="project" value="EnsemblFungi"/>
</dbReference>
<dbReference type="GO" id="GO:0031386">
    <property type="term" value="F:protein tag activity"/>
    <property type="evidence" value="ECO:0007669"/>
    <property type="project" value="EnsemblFungi"/>
</dbReference>
<dbReference type="GO" id="GO:0097163">
    <property type="term" value="F:sulfur carrier activity"/>
    <property type="evidence" value="ECO:0007669"/>
    <property type="project" value="EnsemblFungi"/>
</dbReference>
<dbReference type="GO" id="GO:0007114">
    <property type="term" value="P:cell budding"/>
    <property type="evidence" value="ECO:0007669"/>
    <property type="project" value="EnsemblFungi"/>
</dbReference>
<dbReference type="GO" id="GO:0034599">
    <property type="term" value="P:cellular response to oxidative stress"/>
    <property type="evidence" value="ECO:0007669"/>
    <property type="project" value="EnsemblFungi"/>
</dbReference>
<dbReference type="GO" id="GO:0001403">
    <property type="term" value="P:invasive growth in response to glucose limitation"/>
    <property type="evidence" value="ECO:0007669"/>
    <property type="project" value="EnsemblFungi"/>
</dbReference>
<dbReference type="GO" id="GO:0032447">
    <property type="term" value="P:protein urmylation"/>
    <property type="evidence" value="ECO:0007669"/>
    <property type="project" value="UniProtKB-UniRule"/>
</dbReference>
<dbReference type="GO" id="GO:0002143">
    <property type="term" value="P:tRNA wobble position uridine thiolation"/>
    <property type="evidence" value="ECO:0007669"/>
    <property type="project" value="EnsemblFungi"/>
</dbReference>
<dbReference type="CDD" id="cd01764">
    <property type="entry name" value="Ubl_Urm1"/>
    <property type="match status" value="1"/>
</dbReference>
<dbReference type="Gene3D" id="3.10.20.30">
    <property type="match status" value="1"/>
</dbReference>
<dbReference type="HAMAP" id="MF_03048">
    <property type="entry name" value="Urm1"/>
    <property type="match status" value="1"/>
</dbReference>
<dbReference type="InterPro" id="IPR012675">
    <property type="entry name" value="Beta-grasp_dom_sf"/>
</dbReference>
<dbReference type="InterPro" id="IPR016155">
    <property type="entry name" value="Mopterin_synth/thiamin_S_b"/>
</dbReference>
<dbReference type="InterPro" id="IPR015221">
    <property type="entry name" value="Urm1"/>
</dbReference>
<dbReference type="PANTHER" id="PTHR14986">
    <property type="entry name" value="RURM1 PROTEIN"/>
    <property type="match status" value="1"/>
</dbReference>
<dbReference type="Pfam" id="PF09138">
    <property type="entry name" value="Urm1"/>
    <property type="match status" value="1"/>
</dbReference>
<dbReference type="PIRSF" id="PIRSF037379">
    <property type="entry name" value="Ubiquitin-related_modifier_1"/>
    <property type="match status" value="1"/>
</dbReference>
<dbReference type="SUPFAM" id="SSF54285">
    <property type="entry name" value="MoaD/ThiS"/>
    <property type="match status" value="1"/>
</dbReference>
<sequence length="101" mass="11204">MGFKVKVEFLGGLDVISNKVREHSLKVPLEEGEATVKDLIELITKSIIADPKDIPVFIEDDTVRPGILVLINDTDWELEGMEEYVLESGDVFTFTSTLHGG</sequence>
<organism>
    <name type="scientific">Scheffersomyces stipitis (strain ATCC 58785 / CBS 6054 / NBRC 10063 / NRRL Y-11545)</name>
    <name type="common">Yeast</name>
    <name type="synonym">Pichia stipitis</name>
    <dbReference type="NCBI Taxonomy" id="322104"/>
    <lineage>
        <taxon>Eukaryota</taxon>
        <taxon>Fungi</taxon>
        <taxon>Dikarya</taxon>
        <taxon>Ascomycota</taxon>
        <taxon>Saccharomycotina</taxon>
        <taxon>Pichiomycetes</taxon>
        <taxon>Debaryomycetaceae</taxon>
        <taxon>Scheffersomyces</taxon>
    </lineage>
</organism>
<feature type="chain" id="PRO_0000367886" description="Ubiquitin-related modifier 1">
    <location>
        <begin position="1"/>
        <end position="101"/>
    </location>
</feature>
<feature type="modified residue" description="1-thioglycine" evidence="1">
    <location>
        <position position="101"/>
    </location>
</feature>
<feature type="cross-link" description="Glycyl lysine isopeptide (Gly-Lys) (interchain with K-? in acceptor proteins)" evidence="1">
    <location>
        <position position="101"/>
    </location>
</feature>
<protein>
    <recommendedName>
        <fullName evidence="1">Ubiquitin-related modifier 1</fullName>
    </recommendedName>
</protein>
<gene>
    <name evidence="1" type="primary">URM1</name>
    <name type="ORF">PICST_34179</name>
</gene>